<organism>
    <name type="scientific">Streptococcus pyogenes serotype M49 (strain NZ131)</name>
    <dbReference type="NCBI Taxonomy" id="471876"/>
    <lineage>
        <taxon>Bacteria</taxon>
        <taxon>Bacillati</taxon>
        <taxon>Bacillota</taxon>
        <taxon>Bacilli</taxon>
        <taxon>Lactobacillales</taxon>
        <taxon>Streptococcaceae</taxon>
        <taxon>Streptococcus</taxon>
    </lineage>
</organism>
<protein>
    <recommendedName>
        <fullName evidence="1">Pyrrolidone-carboxylate peptidase</fullName>
        <ecNumber evidence="1">3.4.19.3</ecNumber>
    </recommendedName>
    <alternativeName>
        <fullName evidence="1">5-oxoprolyl-peptidase</fullName>
    </alternativeName>
    <alternativeName>
        <fullName evidence="1">Pyroglutamyl-peptidase I</fullName>
        <shortName evidence="1">PGP-I</shortName>
        <shortName evidence="1">Pyrase</shortName>
    </alternativeName>
</protein>
<gene>
    <name evidence="1" type="primary">pcp</name>
    <name type="ordered locus">Spy49_0425c</name>
</gene>
<dbReference type="EC" id="3.4.19.3" evidence="1"/>
<dbReference type="EMBL" id="CP000829">
    <property type="protein sequence ID" value="ACI60758.1"/>
    <property type="molecule type" value="Genomic_DNA"/>
</dbReference>
<dbReference type="SMR" id="B5XK96"/>
<dbReference type="MEROPS" id="C15.001"/>
<dbReference type="KEGG" id="soz:Spy49_0425c"/>
<dbReference type="HOGENOM" id="CLU_043960_4_0_9"/>
<dbReference type="Proteomes" id="UP000001039">
    <property type="component" value="Chromosome"/>
</dbReference>
<dbReference type="GO" id="GO:0005829">
    <property type="term" value="C:cytosol"/>
    <property type="evidence" value="ECO:0007669"/>
    <property type="project" value="InterPro"/>
</dbReference>
<dbReference type="GO" id="GO:0016920">
    <property type="term" value="F:pyroglutamyl-peptidase activity"/>
    <property type="evidence" value="ECO:0007669"/>
    <property type="project" value="UniProtKB-UniRule"/>
</dbReference>
<dbReference type="GO" id="GO:0006508">
    <property type="term" value="P:proteolysis"/>
    <property type="evidence" value="ECO:0007669"/>
    <property type="project" value="UniProtKB-KW"/>
</dbReference>
<dbReference type="CDD" id="cd00501">
    <property type="entry name" value="Peptidase_C15"/>
    <property type="match status" value="1"/>
</dbReference>
<dbReference type="FunFam" id="3.40.630.20:FF:000001">
    <property type="entry name" value="Pyrrolidone-carboxylate peptidase"/>
    <property type="match status" value="1"/>
</dbReference>
<dbReference type="Gene3D" id="3.40.630.20">
    <property type="entry name" value="Peptidase C15, pyroglutamyl peptidase I-like"/>
    <property type="match status" value="1"/>
</dbReference>
<dbReference type="HAMAP" id="MF_00417">
    <property type="entry name" value="Pyrrolid_peptidase"/>
    <property type="match status" value="1"/>
</dbReference>
<dbReference type="InterPro" id="IPR000816">
    <property type="entry name" value="Peptidase_C15"/>
</dbReference>
<dbReference type="InterPro" id="IPR016125">
    <property type="entry name" value="Peptidase_C15-like"/>
</dbReference>
<dbReference type="InterPro" id="IPR036440">
    <property type="entry name" value="Peptidase_C15-like_sf"/>
</dbReference>
<dbReference type="InterPro" id="IPR029762">
    <property type="entry name" value="PGP-I_bact-type"/>
</dbReference>
<dbReference type="InterPro" id="IPR033694">
    <property type="entry name" value="PGPEP1_Cys_AS"/>
</dbReference>
<dbReference type="InterPro" id="IPR033693">
    <property type="entry name" value="PGPEP1_Glu_AS"/>
</dbReference>
<dbReference type="NCBIfam" id="NF009676">
    <property type="entry name" value="PRK13197.1"/>
    <property type="match status" value="1"/>
</dbReference>
<dbReference type="NCBIfam" id="TIGR00504">
    <property type="entry name" value="pyro_pdase"/>
    <property type="match status" value="1"/>
</dbReference>
<dbReference type="PANTHER" id="PTHR23402">
    <property type="entry name" value="PROTEASE FAMILY C15 PYROGLUTAMYL-PEPTIDASE I-RELATED"/>
    <property type="match status" value="1"/>
</dbReference>
<dbReference type="PANTHER" id="PTHR23402:SF1">
    <property type="entry name" value="PYROGLUTAMYL-PEPTIDASE I"/>
    <property type="match status" value="1"/>
</dbReference>
<dbReference type="Pfam" id="PF01470">
    <property type="entry name" value="Peptidase_C15"/>
    <property type="match status" value="1"/>
</dbReference>
<dbReference type="PIRSF" id="PIRSF015592">
    <property type="entry name" value="Prld-crbxl_pptds"/>
    <property type="match status" value="1"/>
</dbReference>
<dbReference type="PRINTS" id="PR00706">
    <property type="entry name" value="PYROGLUPTASE"/>
</dbReference>
<dbReference type="SUPFAM" id="SSF53182">
    <property type="entry name" value="Pyrrolidone carboxyl peptidase (pyroglutamate aminopeptidase)"/>
    <property type="match status" value="1"/>
</dbReference>
<dbReference type="PROSITE" id="PS01334">
    <property type="entry name" value="PYRASE_CYS"/>
    <property type="match status" value="1"/>
</dbReference>
<dbReference type="PROSITE" id="PS01333">
    <property type="entry name" value="PYRASE_GLU"/>
    <property type="match status" value="1"/>
</dbReference>
<keyword id="KW-0963">Cytoplasm</keyword>
<keyword id="KW-0378">Hydrolase</keyword>
<keyword id="KW-0645">Protease</keyword>
<keyword id="KW-0788">Thiol protease</keyword>
<accession>B5XK96</accession>
<comment type="function">
    <text evidence="1">Removes 5-oxoproline from various penultimate amino acid residues except L-proline.</text>
</comment>
<comment type="catalytic activity">
    <reaction evidence="1">
        <text>Release of an N-terminal pyroglutamyl group from a polypeptide, the second amino acid generally not being Pro.</text>
        <dbReference type="EC" id="3.4.19.3"/>
    </reaction>
</comment>
<comment type="subunit">
    <text evidence="1">Homotetramer.</text>
</comment>
<comment type="subcellular location">
    <subcellularLocation>
        <location evidence="1">Cytoplasm</location>
    </subcellularLocation>
</comment>
<comment type="similarity">
    <text evidence="1">Belongs to the peptidase C15 family.</text>
</comment>
<proteinExistence type="inferred from homology"/>
<sequence>MKILVTGFDPFGGEAINPALEAIKKLPATIHGAEIKCIEVPTVFQKSADVLQQHIESFQPDAVLCIGQAGGRTGLTPERVAINQDDARIPDNEGNQPIDTPIRADGKAAYFSTLPIKAMVAAIHQAGLPASVSNTAGTFVCNHLMYQALYLVDKYCPNAKAGFMHIPFMMEQVVDKPNTAAMNLDDITRGIEAAIFAIVDFKDRSDLKRVGGATH</sequence>
<evidence type="ECO:0000255" key="1">
    <source>
        <dbReference type="HAMAP-Rule" id="MF_00417"/>
    </source>
</evidence>
<reference key="1">
    <citation type="journal article" date="2008" name="J. Bacteriol.">
        <title>Genome sequence of a nephritogenic and highly transformable M49 strain of Streptococcus pyogenes.</title>
        <authorList>
            <person name="McShan W.M."/>
            <person name="Ferretti J.J."/>
            <person name="Karasawa T."/>
            <person name="Suvorov A.N."/>
            <person name="Lin S."/>
            <person name="Qin B."/>
            <person name="Jia H."/>
            <person name="Kenton S."/>
            <person name="Najar F."/>
            <person name="Wu H."/>
            <person name="Scott J."/>
            <person name="Roe B.A."/>
            <person name="Savic D.J."/>
        </authorList>
    </citation>
    <scope>NUCLEOTIDE SEQUENCE [LARGE SCALE GENOMIC DNA]</scope>
    <source>
        <strain>NZ131</strain>
    </source>
</reference>
<name>PCP_STRPZ</name>
<feature type="chain" id="PRO_1000124003" description="Pyrrolidone-carboxylate peptidase">
    <location>
        <begin position="1"/>
        <end position="215"/>
    </location>
</feature>
<feature type="active site" evidence="1">
    <location>
        <position position="78"/>
    </location>
</feature>
<feature type="active site" evidence="1">
    <location>
        <position position="141"/>
    </location>
</feature>
<feature type="active site" evidence="1">
    <location>
        <position position="165"/>
    </location>
</feature>